<keyword id="KW-0238">DNA-binding</keyword>
<keyword id="KW-0479">Metal-binding</keyword>
<keyword id="KW-0539">Nucleus</keyword>
<keyword id="KW-1185">Reference proteome</keyword>
<keyword id="KW-0804">Transcription</keyword>
<keyword id="KW-0805">Transcription regulation</keyword>
<keyword id="KW-0862">Zinc</keyword>
<gene>
    <name evidence="4" type="primary">pyiR</name>
</gene>
<comment type="function">
    <text evidence="3 5">Transcription factor that specifically regulates the expression of the gene cluster that mediates the biosynthesis of the mycotoxin pyrichalasin H, a tyrosine-derived cytochalasan that inhibits the growth of rice seedlings, but also inhibits lymphocyte capping and actin polymerization and alters cell morphology (Probable) (PubMed:31099577). Pyrichalasin H is indicated as the responsible agent for the genus-specific pathogenicity of M.grisea toward crabgrass (PubMed:31099577).</text>
</comment>
<comment type="subcellular location">
    <subcellularLocation>
        <location evidence="1">Nucleus</location>
    </subcellularLocation>
</comment>
<feature type="chain" id="PRO_0000449445" description="Pyrichalasin H cluster regulator pyiR">
    <location>
        <begin position="1"/>
        <end position="611"/>
    </location>
</feature>
<feature type="DNA-binding region" description="Zn(2)-C6 fungal-type" evidence="1">
    <location>
        <begin position="11"/>
        <end position="47"/>
    </location>
</feature>
<feature type="region of interest" description="Disordered" evidence="2">
    <location>
        <begin position="53"/>
        <end position="128"/>
    </location>
</feature>
<feature type="region of interest" description="Disordered" evidence="2">
    <location>
        <begin position="169"/>
        <end position="192"/>
    </location>
</feature>
<feature type="region of interest" description="Disordered" evidence="2">
    <location>
        <begin position="265"/>
        <end position="291"/>
    </location>
</feature>
<feature type="region of interest" description="Disordered" evidence="2">
    <location>
        <begin position="401"/>
        <end position="427"/>
    </location>
</feature>
<feature type="region of interest" description="Disordered" evidence="2">
    <location>
        <begin position="521"/>
        <end position="550"/>
    </location>
</feature>
<feature type="region of interest" description="Disordered" evidence="2">
    <location>
        <begin position="564"/>
        <end position="593"/>
    </location>
</feature>
<feature type="compositionally biased region" description="Basic and acidic residues" evidence="2">
    <location>
        <begin position="59"/>
        <end position="69"/>
    </location>
</feature>
<feature type="compositionally biased region" description="Low complexity" evidence="2">
    <location>
        <begin position="98"/>
        <end position="109"/>
    </location>
</feature>
<feature type="compositionally biased region" description="Polar residues" evidence="2">
    <location>
        <begin position="265"/>
        <end position="279"/>
    </location>
</feature>
<feature type="compositionally biased region" description="Gly residues" evidence="2">
    <location>
        <begin position="572"/>
        <end position="587"/>
    </location>
</feature>
<protein>
    <recommendedName>
        <fullName evidence="4">Pyrichalasin H cluster regulator pyiR</fullName>
    </recommendedName>
    <alternativeName>
        <fullName evidence="4">Pyrichalasin H biosynthesis cluster protein R</fullName>
    </alternativeName>
</protein>
<proteinExistence type="inferred from homology"/>
<sequence>MHRFNPRRSACDRCRGHKLRCIRLDPGPNDTGALLPCKRCVKAGAECIHTANLSVKPPGDGHHSAHRATESPGHPAAFQQETRVSDRQLRESSLGISPTQPAPQRQTQRWSSSSGPHRPEDRESLPPWHMFATPMFSRQQLGFSKLPSHANGPPDDRTADGFEVGSEAALAAPPGSERSPHRTSRAPSDGTTTFSLVDKVFDLDGRAVCPLSGSVLQENAGIVTAAASTTVTSAQTHHMLPFSQVEPLTPSSYFNVPTCSTLTTGGAGSQSLRDQQMQQHQRHGSASGRSSAATQDSCLQLLSQLSSKFLMDFGKSSAGDWSKMANNNTNNHLSTTISNLFDGLQIFLKTIECLRPATFLENSSSDSECSYSDLCDESEFVGSTGDNQMQVYPGAMAVDHAHEGSSTENSAHRRGRGASPTADAAPQPLDMPMTLTILTCYTWLLKGYEVVLSEIYQMLASQDRHQGLQTLPTIVQGVGIGGFKLEDHPDMQIEIVIHVGWQLLQRIEGLLGVRVVSDEGRGGLGGSSRDESSTEGGDGGGAGSSASDERRILDPRAAAAVLDSWFTTTTRGGSGGSGPGEGTGDSNGGRTVEIKGTIANIRKYLRSYGRN</sequence>
<organism>
    <name type="scientific">Pyricularia grisea</name>
    <name type="common">Crabgrass-specific blast fungus</name>
    <name type="synonym">Magnaporthe grisea</name>
    <dbReference type="NCBI Taxonomy" id="148305"/>
    <lineage>
        <taxon>Eukaryota</taxon>
        <taxon>Fungi</taxon>
        <taxon>Dikarya</taxon>
        <taxon>Ascomycota</taxon>
        <taxon>Pezizomycotina</taxon>
        <taxon>Sordariomycetes</taxon>
        <taxon>Sordariomycetidae</taxon>
        <taxon>Magnaporthales</taxon>
        <taxon>Pyriculariaceae</taxon>
        <taxon>Pyricularia</taxon>
    </lineage>
</organism>
<name>PYIR_PYRGI</name>
<reference key="1">
    <citation type="journal article" date="2019" name="Org. Lett.">
        <title>Targeted gene inactivations expose silent cytochalasans in Magnaporthe grisea NI980.</title>
        <authorList>
            <person name="Wang C."/>
            <person name="Hantke V."/>
            <person name="Cox R.J."/>
            <person name="Skellam E."/>
        </authorList>
    </citation>
    <scope>NUCLEOTIDE SEQUENCE [GENOMIC DNA]</scope>
    <scope>FUNCTION</scope>
    <source>
        <strain>NI980</strain>
    </source>
</reference>
<reference key="2">
    <citation type="journal article" date="2019" name="Org. Lett.">
        <title>Investigating the function of cryptic cytochalasan cytochrome P450 monooxygenases using combinatorial biosynthesis.</title>
        <authorList>
            <person name="Wang C."/>
            <person name="Becker K."/>
            <person name="Pfuetze S."/>
            <person name="Kuhnert E."/>
            <person name="Stadler M."/>
            <person name="Cox R.J."/>
            <person name="Skellam E."/>
        </authorList>
    </citation>
    <scope>FUNCTION</scope>
</reference>
<accession>A0A4P8W7L7</accession>
<evidence type="ECO:0000255" key="1">
    <source>
        <dbReference type="PROSITE-ProRule" id="PRU00227"/>
    </source>
</evidence>
<evidence type="ECO:0000256" key="2">
    <source>
        <dbReference type="SAM" id="MobiDB-lite"/>
    </source>
</evidence>
<evidence type="ECO:0000269" key="3">
    <source>
    </source>
</evidence>
<evidence type="ECO:0000303" key="4">
    <source>
    </source>
</evidence>
<evidence type="ECO:0000305" key="5">
    <source>
    </source>
</evidence>
<dbReference type="EMBL" id="MK801691">
    <property type="protein sequence ID" value="QCS37518.1"/>
    <property type="molecule type" value="Genomic_DNA"/>
</dbReference>
<dbReference type="Proteomes" id="UP000515153">
    <property type="component" value="Unplaced"/>
</dbReference>
<dbReference type="GO" id="GO:0005634">
    <property type="term" value="C:nucleus"/>
    <property type="evidence" value="ECO:0007669"/>
    <property type="project" value="UniProtKB-SubCell"/>
</dbReference>
<dbReference type="GO" id="GO:0003677">
    <property type="term" value="F:DNA binding"/>
    <property type="evidence" value="ECO:0007669"/>
    <property type="project" value="UniProtKB-KW"/>
</dbReference>
<dbReference type="GO" id="GO:0000981">
    <property type="term" value="F:DNA-binding transcription factor activity, RNA polymerase II-specific"/>
    <property type="evidence" value="ECO:0007669"/>
    <property type="project" value="InterPro"/>
</dbReference>
<dbReference type="GO" id="GO:0008270">
    <property type="term" value="F:zinc ion binding"/>
    <property type="evidence" value="ECO:0007669"/>
    <property type="project" value="InterPro"/>
</dbReference>
<dbReference type="CDD" id="cd00067">
    <property type="entry name" value="GAL4"/>
    <property type="match status" value="1"/>
</dbReference>
<dbReference type="Gene3D" id="4.10.240.10">
    <property type="entry name" value="Zn(2)-C6 fungal-type DNA-binding domain"/>
    <property type="match status" value="1"/>
</dbReference>
<dbReference type="InterPro" id="IPR036864">
    <property type="entry name" value="Zn2-C6_fun-type_DNA-bd_sf"/>
</dbReference>
<dbReference type="InterPro" id="IPR001138">
    <property type="entry name" value="Zn2Cys6_DnaBD"/>
</dbReference>
<dbReference type="Pfam" id="PF00172">
    <property type="entry name" value="Zn_clus"/>
    <property type="match status" value="1"/>
</dbReference>
<dbReference type="SMART" id="SM00066">
    <property type="entry name" value="GAL4"/>
    <property type="match status" value="1"/>
</dbReference>
<dbReference type="SUPFAM" id="SSF57701">
    <property type="entry name" value="Zn2/Cys6 DNA-binding domain"/>
    <property type="match status" value="1"/>
</dbReference>
<dbReference type="PROSITE" id="PS50048">
    <property type="entry name" value="ZN2_CY6_FUNGAL_2"/>
    <property type="match status" value="1"/>
</dbReference>